<organism>
    <name type="scientific">Rana temporaria</name>
    <name type="common">European common frog</name>
    <dbReference type="NCBI Taxonomy" id="8407"/>
    <lineage>
        <taxon>Eukaryota</taxon>
        <taxon>Metazoa</taxon>
        <taxon>Chordata</taxon>
        <taxon>Craniata</taxon>
        <taxon>Vertebrata</taxon>
        <taxon>Euteleostomi</taxon>
        <taxon>Amphibia</taxon>
        <taxon>Batrachia</taxon>
        <taxon>Anura</taxon>
        <taxon>Neobatrachia</taxon>
        <taxon>Ranoidea</taxon>
        <taxon>Ranidae</taxon>
        <taxon>Rana</taxon>
        <taxon>Rana</taxon>
    </lineage>
</organism>
<comment type="function">
    <text evidence="2 3">Antibacterial activity against Gram-positive bacterium S.aureus and Gram-negative bacterium E.coli. No activity against C.albicans.</text>
</comment>
<comment type="subcellular location">
    <subcellularLocation>
        <location evidence="2 3 4">Secreted</location>
    </subcellularLocation>
</comment>
<comment type="tissue specificity">
    <text evidence="8 9 10">Expressed by the skin glands.</text>
</comment>
<comment type="mass spectrometry"/>
<comment type="mass spectrometry"/>
<comment type="similarity">
    <text evidence="7">Belongs to the frog skin active peptide (FSAP) family. Ranatuerin subfamily.</text>
</comment>
<sequence>GLLSGLKKVGKHVAKNVAVSLMDSLKCKISGDC</sequence>
<keyword id="KW-0878">Amphibian defense peptide</keyword>
<keyword id="KW-0044">Antibiotic</keyword>
<keyword id="KW-0929">Antimicrobial</keyword>
<keyword id="KW-0903">Direct protein sequencing</keyword>
<keyword id="KW-1015">Disulfide bond</keyword>
<keyword id="KW-0964">Secreted</keyword>
<protein>
    <recommendedName>
        <fullName evidence="5">Ranatuerin-1T</fullName>
    </recommendedName>
    <alternativeName>
        <fullName>Brevinin-2T</fullName>
    </alternativeName>
</protein>
<name>RN1_RANTE</name>
<feature type="peptide" id="PRO_0000044661" description="Ranatuerin-1T">
    <location>
        <begin position="1"/>
        <end position="33"/>
    </location>
</feature>
<feature type="disulfide bond" evidence="1">
    <location>
        <begin position="27"/>
        <end position="33"/>
    </location>
</feature>
<reference key="1">
    <citation type="journal article" date="1998" name="Biopolymers">
        <title>Antimicrobial peptides from amphibian skin: what do they tell us?</title>
        <authorList>
            <person name="Simmaco M."/>
            <person name="Mignogna G."/>
            <person name="Barra D."/>
        </authorList>
    </citation>
    <scope>PROTEIN SEQUENCE</scope>
    <scope>FUNCTION</scope>
    <scope>SUBCELLULAR LOCATION</scope>
    <source>
        <tissue>Skin secretion</tissue>
    </source>
</reference>
<reference key="2">
    <citation type="journal article" date="1999" name="Peptides">
        <title>Ranatuerin 1T: an antimicrobial peptide isolated from the skin of the frog, Rana temporaria.</title>
        <authorList>
            <person name="Goraya J."/>
            <person name="Knoop F.C."/>
            <person name="Conlon J.M."/>
        </authorList>
    </citation>
    <scope>PROTEIN SEQUENCE</scope>
    <scope>FUNCTION</scope>
    <scope>SUBCELLULAR LOCATION</scope>
    <scope>MASS SPECTROMETRY</scope>
    <source>
        <tissue>Skin secretion</tissue>
    </source>
</reference>
<reference key="3">
    <citation type="journal article" date="2021" name="Anal. Bioanal. Chem.">
        <title>Differentiation of Central Slovenian and Moscow populations of Rana temporaria frogs using peptide biomarkers of temporins family.</title>
        <authorList>
            <person name="Samgina T.Y."/>
            <person name="Vasileva I.D."/>
            <person name="Kovalev S.V."/>
            <person name="Trebse P."/>
            <person name="Torkar G."/>
            <person name="Surin A.K."/>
            <person name="Zubarev R.A."/>
            <person name="Lebedev A.T."/>
        </authorList>
    </citation>
    <scope>PROTEIN SEQUENCE</scope>
    <scope>IDENTIFICATION BY MASS SPECTROMETRY</scope>
    <scope>SUBCELLULAR LOCATION</scope>
    <source>
        <tissue evidence="6">Skin secretion</tissue>
    </source>
</reference>
<dbReference type="SMR" id="P82740"/>
<dbReference type="GO" id="GO:0005576">
    <property type="term" value="C:extracellular region"/>
    <property type="evidence" value="ECO:0000314"/>
    <property type="project" value="UniProtKB"/>
</dbReference>
<dbReference type="GO" id="GO:0042742">
    <property type="term" value="P:defense response to bacterium"/>
    <property type="evidence" value="ECO:0007669"/>
    <property type="project" value="UniProtKB-KW"/>
</dbReference>
<dbReference type="InterPro" id="IPR012521">
    <property type="entry name" value="Antimicrobial_frog_2"/>
</dbReference>
<dbReference type="Pfam" id="PF08023">
    <property type="entry name" value="Antimicrobial_2"/>
    <property type="match status" value="1"/>
</dbReference>
<accession>P82740</accession>
<accession>P82236</accession>
<proteinExistence type="evidence at protein level"/>
<evidence type="ECO:0000250" key="1"/>
<evidence type="ECO:0000269" key="2">
    <source>
    </source>
</evidence>
<evidence type="ECO:0000269" key="3">
    <source>
    </source>
</evidence>
<evidence type="ECO:0000269" key="4">
    <source>
    </source>
</evidence>
<evidence type="ECO:0000303" key="5">
    <source>
    </source>
</evidence>
<evidence type="ECO:0000303" key="6">
    <source>
    </source>
</evidence>
<evidence type="ECO:0000305" key="7"/>
<evidence type="ECO:0000305" key="8">
    <source>
    </source>
</evidence>
<evidence type="ECO:0000305" key="9">
    <source>
    </source>
</evidence>
<evidence type="ECO:0000305" key="10">
    <source>
    </source>
</evidence>